<protein>
    <recommendedName>
        <fullName>General secretion pathway protein N</fullName>
    </recommendedName>
    <alternativeName>
        <fullName>Protein XpsN</fullName>
    </alternativeName>
</protein>
<accession>P29040</accession>
<reference key="1">
    <citation type="journal article" date="2000" name="J. Bacteriol.">
        <title>Association of the cytoplasmic membrane protein XpsN with the outer membrane protein XpsD in the type II protein secretion apparatus of Xanthomonas campestris pv. campestris.</title>
        <authorList>
            <person name="Lee H.-M."/>
            <person name="Wang K.-C."/>
            <person name="Liu Y.-L."/>
            <person name="Yew H.-Y."/>
            <person name="Chen L.-Y."/>
            <person name="Leu W.-M."/>
            <person name="Chen D.C."/>
            <person name="Hu N.-T."/>
        </authorList>
    </citation>
    <scope>NUCLEOTIDE SEQUENCE [GENOMIC DNA]</scope>
    <scope>FUNCTION</scope>
    <scope>SUBCELLULAR LOCATION</scope>
    <scope>SUBUNIT</scope>
    <source>
        <strain>Xc1701</strain>
    </source>
</reference>
<reference key="2">
    <citation type="journal article" date="2002" name="Nature">
        <title>Comparison of the genomes of two Xanthomonas pathogens with differing host specificities.</title>
        <authorList>
            <person name="da Silva A.C.R."/>
            <person name="Ferro J.A."/>
            <person name="Reinach F.C."/>
            <person name="Farah C.S."/>
            <person name="Furlan L.R."/>
            <person name="Quaggio R.B."/>
            <person name="Monteiro-Vitorello C.B."/>
            <person name="Van Sluys M.A."/>
            <person name="Almeida N.F. Jr."/>
            <person name="Alves L.M.C."/>
            <person name="do Amaral A.M."/>
            <person name="Bertolini M.C."/>
            <person name="Camargo L.E.A."/>
            <person name="Camarotte G."/>
            <person name="Cannavan F."/>
            <person name="Cardozo J."/>
            <person name="Chambergo F."/>
            <person name="Ciapina L.P."/>
            <person name="Cicarelli R.M.B."/>
            <person name="Coutinho L.L."/>
            <person name="Cursino-Santos J.R."/>
            <person name="El-Dorry H."/>
            <person name="Faria J.B."/>
            <person name="Ferreira A.J.S."/>
            <person name="Ferreira R.C.C."/>
            <person name="Ferro M.I.T."/>
            <person name="Formighieri E.F."/>
            <person name="Franco M.C."/>
            <person name="Greggio C.C."/>
            <person name="Gruber A."/>
            <person name="Katsuyama A.M."/>
            <person name="Kishi L.T."/>
            <person name="Leite R.P."/>
            <person name="Lemos E.G.M."/>
            <person name="Lemos M.V.F."/>
            <person name="Locali E.C."/>
            <person name="Machado M.A."/>
            <person name="Madeira A.M.B.N."/>
            <person name="Martinez-Rossi N.M."/>
            <person name="Martins E.C."/>
            <person name="Meidanis J."/>
            <person name="Menck C.F.M."/>
            <person name="Miyaki C.Y."/>
            <person name="Moon D.H."/>
            <person name="Moreira L.M."/>
            <person name="Novo M.T.M."/>
            <person name="Okura V.K."/>
            <person name="Oliveira M.C."/>
            <person name="Oliveira V.R."/>
            <person name="Pereira H.A."/>
            <person name="Rossi A."/>
            <person name="Sena J.A.D."/>
            <person name="Silva C."/>
            <person name="de Souza R.F."/>
            <person name="Spinola L.A.F."/>
            <person name="Takita M.A."/>
            <person name="Tamura R.E."/>
            <person name="Teixeira E.C."/>
            <person name="Tezza R.I.D."/>
            <person name="Trindade dos Santos M."/>
            <person name="Truffi D."/>
            <person name="Tsai S.M."/>
            <person name="White F.F."/>
            <person name="Setubal J.C."/>
            <person name="Kitajima J.P."/>
        </authorList>
    </citation>
    <scope>NUCLEOTIDE SEQUENCE [LARGE SCALE GENOMIC DNA]</scope>
    <source>
        <strain>ATCC 33913 / DSM 3586 / NCPPB 528 / LMG 568 / P 25</strain>
    </source>
</reference>
<reference key="3">
    <citation type="journal article" date="1992" name="J. Bacteriol.">
        <title>Cloning and characterization of a gene required for the secretion of extracellular enzymes across the outer membrane by Xanthomonas campestris pv. campestris.</title>
        <authorList>
            <person name="Hu N.-T."/>
            <person name="Hung M.-N."/>
            <person name="Chiou S.-J."/>
            <person name="Tang F."/>
            <person name="Chiang D.-C."/>
            <person name="Huang H.-Y."/>
            <person name="Wu C.-Y."/>
        </authorList>
    </citation>
    <scope>NUCLEOTIDE SEQUENCE [GENOMIC DNA] OF 5-261</scope>
</reference>
<gene>
    <name type="primary">xpsN</name>
    <name type="ordered locus">XCC0669</name>
</gene>
<name>XPSN_XANCP</name>
<proteinExistence type="evidence at protein level"/>
<sequence length="261" mass="27469">MRLEMIGLRTWLLATVVGWALLVCVLAVAGLGKRVELLPDDPALVQRLPALPAPAPERLGPFEKYAEIAAHPAFAEDRLPHPFFLSGNDGSGAASTVRLTGVLLTSTFKMATLTLDPADSVRVQLGGDAVKGYRLLALQPRSATIEGPGGTQTLELQVFNGQGGQPPTAIGGRPQAPGAVPPLPPNVPPAPATPAPPPAEVPQQQPGGQAPPTVPPQRSDGAQEAPRPSDEQMRAIRERIEARRRQLQQQRQGGSTPGQTQ</sequence>
<comment type="function">
    <text evidence="3">Involved in a general secretion pathway (GSP) for the export of proteins.</text>
</comment>
<comment type="subunit">
    <text evidence="3">Binds to XpsD.</text>
</comment>
<comment type="subcellular location">
    <subcellularLocation>
        <location evidence="3">Cell inner membrane</location>
        <topology evidence="3">Single-pass type II membrane protein</topology>
    </subcellularLocation>
</comment>
<evidence type="ECO:0000255" key="1"/>
<evidence type="ECO:0000256" key="2">
    <source>
        <dbReference type="SAM" id="MobiDB-lite"/>
    </source>
</evidence>
<evidence type="ECO:0000269" key="3">
    <source>
    </source>
</evidence>
<organism>
    <name type="scientific">Xanthomonas campestris pv. campestris (strain ATCC 33913 / DSM 3586 / NCPPB 528 / LMG 568 / P 25)</name>
    <dbReference type="NCBI Taxonomy" id="190485"/>
    <lineage>
        <taxon>Bacteria</taxon>
        <taxon>Pseudomonadati</taxon>
        <taxon>Pseudomonadota</taxon>
        <taxon>Gammaproteobacteria</taxon>
        <taxon>Lysobacterales</taxon>
        <taxon>Lysobacteraceae</taxon>
        <taxon>Xanthomonas</taxon>
    </lineage>
</organism>
<feature type="chain" id="PRO_0000066041" description="General secretion pathway protein N">
    <location>
        <begin position="1"/>
        <end position="261"/>
    </location>
</feature>
<feature type="topological domain" description="Cytoplasmic" evidence="1">
    <location>
        <begin position="1"/>
        <end position="10"/>
    </location>
</feature>
<feature type="transmembrane region" description="Helical" evidence="1">
    <location>
        <begin position="11"/>
        <end position="31"/>
    </location>
</feature>
<feature type="topological domain" description="Periplasmic" evidence="1">
    <location>
        <begin position="32"/>
        <end position="261"/>
    </location>
</feature>
<feature type="region of interest" description="Disordered" evidence="2">
    <location>
        <begin position="158"/>
        <end position="261"/>
    </location>
</feature>
<feature type="compositionally biased region" description="Pro residues" evidence="2">
    <location>
        <begin position="179"/>
        <end position="200"/>
    </location>
</feature>
<feature type="compositionally biased region" description="Low complexity" evidence="2">
    <location>
        <begin position="201"/>
        <end position="211"/>
    </location>
</feature>
<feature type="compositionally biased region" description="Basic and acidic residues" evidence="2">
    <location>
        <begin position="227"/>
        <end position="244"/>
    </location>
</feature>
<dbReference type="EMBL" id="M81648">
    <property type="protein sequence ID" value="AAA27614.2"/>
    <property type="molecule type" value="Genomic_DNA"/>
</dbReference>
<dbReference type="EMBL" id="AE008922">
    <property type="protein sequence ID" value="AAM39985.1"/>
    <property type="molecule type" value="Genomic_DNA"/>
</dbReference>
<dbReference type="PIR" id="B41843">
    <property type="entry name" value="B41843"/>
</dbReference>
<dbReference type="RefSeq" id="NP_636061.1">
    <property type="nucleotide sequence ID" value="NC_003902.1"/>
</dbReference>
<dbReference type="RefSeq" id="WP_011035909.1">
    <property type="nucleotide sequence ID" value="NC_003902.1"/>
</dbReference>
<dbReference type="SMR" id="P29040"/>
<dbReference type="STRING" id="190485.XCC0669"/>
<dbReference type="EnsemblBacteria" id="AAM39985">
    <property type="protein sequence ID" value="AAM39985"/>
    <property type="gene ID" value="XCC0669"/>
</dbReference>
<dbReference type="KEGG" id="xcc:XCC0669"/>
<dbReference type="PATRIC" id="fig|190485.4.peg.734"/>
<dbReference type="eggNOG" id="ENOG5031A2G">
    <property type="taxonomic scope" value="Bacteria"/>
</dbReference>
<dbReference type="HOGENOM" id="CLU_095361_0_0_6"/>
<dbReference type="OrthoDB" id="6051102at2"/>
<dbReference type="Proteomes" id="UP000001010">
    <property type="component" value="Chromosome"/>
</dbReference>
<dbReference type="GO" id="GO:0005886">
    <property type="term" value="C:plasma membrane"/>
    <property type="evidence" value="ECO:0007669"/>
    <property type="project" value="UniProtKB-SubCell"/>
</dbReference>
<dbReference type="InterPro" id="IPR048187">
    <property type="entry name" value="XpsN-like"/>
</dbReference>
<dbReference type="NCBIfam" id="NF041470">
    <property type="entry name" value="sec_prot_XpsN"/>
    <property type="match status" value="1"/>
</dbReference>
<keyword id="KW-0997">Cell inner membrane</keyword>
<keyword id="KW-1003">Cell membrane</keyword>
<keyword id="KW-0472">Membrane</keyword>
<keyword id="KW-1185">Reference proteome</keyword>
<keyword id="KW-0812">Transmembrane</keyword>
<keyword id="KW-1133">Transmembrane helix</keyword>
<keyword id="KW-0813">Transport</keyword>